<dbReference type="EC" id="5.4.2.10" evidence="1"/>
<dbReference type="EMBL" id="CP000036">
    <property type="protein sequence ID" value="ABB67705.1"/>
    <property type="molecule type" value="Genomic_DNA"/>
</dbReference>
<dbReference type="RefSeq" id="WP_000071161.1">
    <property type="nucleotide sequence ID" value="NC_007613.1"/>
</dbReference>
<dbReference type="SMR" id="Q31W53"/>
<dbReference type="KEGG" id="sbo:SBO_3206"/>
<dbReference type="HOGENOM" id="CLU_016950_7_0_6"/>
<dbReference type="Proteomes" id="UP000007067">
    <property type="component" value="Chromosome"/>
</dbReference>
<dbReference type="GO" id="GO:0005829">
    <property type="term" value="C:cytosol"/>
    <property type="evidence" value="ECO:0007669"/>
    <property type="project" value="TreeGrafter"/>
</dbReference>
<dbReference type="GO" id="GO:0000287">
    <property type="term" value="F:magnesium ion binding"/>
    <property type="evidence" value="ECO:0007669"/>
    <property type="project" value="UniProtKB-UniRule"/>
</dbReference>
<dbReference type="GO" id="GO:0008966">
    <property type="term" value="F:phosphoglucosamine mutase activity"/>
    <property type="evidence" value="ECO:0007669"/>
    <property type="project" value="UniProtKB-UniRule"/>
</dbReference>
<dbReference type="GO" id="GO:0004615">
    <property type="term" value="F:phosphomannomutase activity"/>
    <property type="evidence" value="ECO:0007669"/>
    <property type="project" value="TreeGrafter"/>
</dbReference>
<dbReference type="GO" id="GO:0005975">
    <property type="term" value="P:carbohydrate metabolic process"/>
    <property type="evidence" value="ECO:0007669"/>
    <property type="project" value="InterPro"/>
</dbReference>
<dbReference type="GO" id="GO:0009252">
    <property type="term" value="P:peptidoglycan biosynthetic process"/>
    <property type="evidence" value="ECO:0007669"/>
    <property type="project" value="TreeGrafter"/>
</dbReference>
<dbReference type="GO" id="GO:0006048">
    <property type="term" value="P:UDP-N-acetylglucosamine biosynthetic process"/>
    <property type="evidence" value="ECO:0007669"/>
    <property type="project" value="TreeGrafter"/>
</dbReference>
<dbReference type="CDD" id="cd05802">
    <property type="entry name" value="GlmM"/>
    <property type="match status" value="1"/>
</dbReference>
<dbReference type="FunFam" id="3.30.310.50:FF:000001">
    <property type="entry name" value="Phosphoglucosamine mutase"/>
    <property type="match status" value="1"/>
</dbReference>
<dbReference type="FunFam" id="3.40.120.10:FF:000001">
    <property type="entry name" value="Phosphoglucosamine mutase"/>
    <property type="match status" value="1"/>
</dbReference>
<dbReference type="FunFam" id="3.40.120.10:FF:000002">
    <property type="entry name" value="Phosphoglucosamine mutase"/>
    <property type="match status" value="1"/>
</dbReference>
<dbReference type="Gene3D" id="3.40.120.10">
    <property type="entry name" value="Alpha-D-Glucose-1,6-Bisphosphate, subunit A, domain 3"/>
    <property type="match status" value="3"/>
</dbReference>
<dbReference type="Gene3D" id="3.30.310.50">
    <property type="entry name" value="Alpha-D-phosphohexomutase, C-terminal domain"/>
    <property type="match status" value="1"/>
</dbReference>
<dbReference type="HAMAP" id="MF_01554_B">
    <property type="entry name" value="GlmM_B"/>
    <property type="match status" value="1"/>
</dbReference>
<dbReference type="InterPro" id="IPR005844">
    <property type="entry name" value="A-D-PHexomutase_a/b/a-I"/>
</dbReference>
<dbReference type="InterPro" id="IPR016055">
    <property type="entry name" value="A-D-PHexomutase_a/b/a-I/II/III"/>
</dbReference>
<dbReference type="InterPro" id="IPR005845">
    <property type="entry name" value="A-D-PHexomutase_a/b/a-II"/>
</dbReference>
<dbReference type="InterPro" id="IPR005846">
    <property type="entry name" value="A-D-PHexomutase_a/b/a-III"/>
</dbReference>
<dbReference type="InterPro" id="IPR005843">
    <property type="entry name" value="A-D-PHexomutase_C"/>
</dbReference>
<dbReference type="InterPro" id="IPR036900">
    <property type="entry name" value="A-D-PHexomutase_C_sf"/>
</dbReference>
<dbReference type="InterPro" id="IPR016066">
    <property type="entry name" value="A-D-PHexomutase_CS"/>
</dbReference>
<dbReference type="InterPro" id="IPR005841">
    <property type="entry name" value="Alpha-D-phosphohexomutase_SF"/>
</dbReference>
<dbReference type="InterPro" id="IPR006352">
    <property type="entry name" value="GlmM_bact"/>
</dbReference>
<dbReference type="InterPro" id="IPR050060">
    <property type="entry name" value="Phosphoglucosamine_mutase"/>
</dbReference>
<dbReference type="NCBIfam" id="TIGR01455">
    <property type="entry name" value="glmM"/>
    <property type="match status" value="1"/>
</dbReference>
<dbReference type="NCBIfam" id="NF008139">
    <property type="entry name" value="PRK10887.1"/>
    <property type="match status" value="1"/>
</dbReference>
<dbReference type="PANTHER" id="PTHR42946:SF1">
    <property type="entry name" value="PHOSPHOGLUCOMUTASE (ALPHA-D-GLUCOSE-1,6-BISPHOSPHATE-DEPENDENT)"/>
    <property type="match status" value="1"/>
</dbReference>
<dbReference type="PANTHER" id="PTHR42946">
    <property type="entry name" value="PHOSPHOHEXOSE MUTASE"/>
    <property type="match status" value="1"/>
</dbReference>
<dbReference type="Pfam" id="PF02878">
    <property type="entry name" value="PGM_PMM_I"/>
    <property type="match status" value="1"/>
</dbReference>
<dbReference type="Pfam" id="PF02879">
    <property type="entry name" value="PGM_PMM_II"/>
    <property type="match status" value="1"/>
</dbReference>
<dbReference type="Pfam" id="PF02880">
    <property type="entry name" value="PGM_PMM_III"/>
    <property type="match status" value="1"/>
</dbReference>
<dbReference type="Pfam" id="PF00408">
    <property type="entry name" value="PGM_PMM_IV"/>
    <property type="match status" value="1"/>
</dbReference>
<dbReference type="PRINTS" id="PR00509">
    <property type="entry name" value="PGMPMM"/>
</dbReference>
<dbReference type="SUPFAM" id="SSF55957">
    <property type="entry name" value="Phosphoglucomutase, C-terminal domain"/>
    <property type="match status" value="1"/>
</dbReference>
<dbReference type="SUPFAM" id="SSF53738">
    <property type="entry name" value="Phosphoglucomutase, first 3 domains"/>
    <property type="match status" value="3"/>
</dbReference>
<dbReference type="PROSITE" id="PS00710">
    <property type="entry name" value="PGM_PMM"/>
    <property type="match status" value="1"/>
</dbReference>
<gene>
    <name evidence="1" type="primary">glmM</name>
    <name type="ordered locus">SBO_3206</name>
</gene>
<protein>
    <recommendedName>
        <fullName evidence="1">Phosphoglucosamine mutase</fullName>
        <ecNumber evidence="1">5.4.2.10</ecNumber>
    </recommendedName>
</protein>
<evidence type="ECO:0000255" key="1">
    <source>
        <dbReference type="HAMAP-Rule" id="MF_01554"/>
    </source>
</evidence>
<organism>
    <name type="scientific">Shigella boydii serotype 4 (strain Sb227)</name>
    <dbReference type="NCBI Taxonomy" id="300268"/>
    <lineage>
        <taxon>Bacteria</taxon>
        <taxon>Pseudomonadati</taxon>
        <taxon>Pseudomonadota</taxon>
        <taxon>Gammaproteobacteria</taxon>
        <taxon>Enterobacterales</taxon>
        <taxon>Enterobacteriaceae</taxon>
        <taxon>Shigella</taxon>
    </lineage>
</organism>
<feature type="chain" id="PRO_0000301379" description="Phosphoglucosamine mutase">
    <location>
        <begin position="1"/>
        <end position="445"/>
    </location>
</feature>
<feature type="active site" description="Phosphoserine intermediate" evidence="1">
    <location>
        <position position="102"/>
    </location>
</feature>
<feature type="binding site" description="via phosphate group" evidence="1">
    <location>
        <position position="102"/>
    </location>
    <ligand>
        <name>Mg(2+)</name>
        <dbReference type="ChEBI" id="CHEBI:18420"/>
    </ligand>
</feature>
<feature type="binding site" evidence="1">
    <location>
        <position position="241"/>
    </location>
    <ligand>
        <name>Mg(2+)</name>
        <dbReference type="ChEBI" id="CHEBI:18420"/>
    </ligand>
</feature>
<feature type="binding site" evidence="1">
    <location>
        <position position="243"/>
    </location>
    <ligand>
        <name>Mg(2+)</name>
        <dbReference type="ChEBI" id="CHEBI:18420"/>
    </ligand>
</feature>
<feature type="binding site" evidence="1">
    <location>
        <position position="245"/>
    </location>
    <ligand>
        <name>Mg(2+)</name>
        <dbReference type="ChEBI" id="CHEBI:18420"/>
    </ligand>
</feature>
<feature type="modified residue" description="Phosphoserine" evidence="1">
    <location>
        <position position="102"/>
    </location>
</feature>
<comment type="function">
    <text evidence="1">Catalyzes the conversion of glucosamine-6-phosphate to glucosamine-1-phosphate.</text>
</comment>
<comment type="catalytic activity">
    <reaction evidence="1">
        <text>alpha-D-glucosamine 1-phosphate = D-glucosamine 6-phosphate</text>
        <dbReference type="Rhea" id="RHEA:23424"/>
        <dbReference type="ChEBI" id="CHEBI:58516"/>
        <dbReference type="ChEBI" id="CHEBI:58725"/>
        <dbReference type="EC" id="5.4.2.10"/>
    </reaction>
</comment>
<comment type="cofactor">
    <cofactor evidence="1">
        <name>Mg(2+)</name>
        <dbReference type="ChEBI" id="CHEBI:18420"/>
    </cofactor>
    <text evidence="1">Binds 1 Mg(2+) ion per subunit.</text>
</comment>
<comment type="PTM">
    <text evidence="1">Activated by phosphorylation.</text>
</comment>
<comment type="similarity">
    <text evidence="1">Belongs to the phosphohexose mutase family.</text>
</comment>
<keyword id="KW-0413">Isomerase</keyword>
<keyword id="KW-0460">Magnesium</keyword>
<keyword id="KW-0479">Metal-binding</keyword>
<keyword id="KW-0597">Phosphoprotein</keyword>
<reference key="1">
    <citation type="journal article" date="2005" name="Nucleic Acids Res.">
        <title>Genome dynamics and diversity of Shigella species, the etiologic agents of bacillary dysentery.</title>
        <authorList>
            <person name="Yang F."/>
            <person name="Yang J."/>
            <person name="Zhang X."/>
            <person name="Chen L."/>
            <person name="Jiang Y."/>
            <person name="Yan Y."/>
            <person name="Tang X."/>
            <person name="Wang J."/>
            <person name="Xiong Z."/>
            <person name="Dong J."/>
            <person name="Xue Y."/>
            <person name="Zhu Y."/>
            <person name="Xu X."/>
            <person name="Sun L."/>
            <person name="Chen S."/>
            <person name="Nie H."/>
            <person name="Peng J."/>
            <person name="Xu J."/>
            <person name="Wang Y."/>
            <person name="Yuan Z."/>
            <person name="Wen Y."/>
            <person name="Yao Z."/>
            <person name="Shen Y."/>
            <person name="Qiang B."/>
            <person name="Hou Y."/>
            <person name="Yu J."/>
            <person name="Jin Q."/>
        </authorList>
    </citation>
    <scope>NUCLEOTIDE SEQUENCE [LARGE SCALE GENOMIC DNA]</scope>
    <source>
        <strain>Sb227</strain>
    </source>
</reference>
<name>GLMM_SHIBS</name>
<proteinExistence type="inferred from homology"/>
<accession>Q31W53</accession>
<sequence>MSNRKYFGTDGIRGRVGDAPITPDFVLKLGWAAGKVLARHGSRKIIISKDTRISGYMLESALEAGLAAAGLSALFTGPMPTPAVAYLTRTFRAEAGIVISASHNPFYDNGIKFFSIDGTKLPDAVEEAIEAEMEKEISCVDSAELGKASRIVDAAGRYIEFCKATFPNELSLSELKIVVDCANGATYHIAPNVLRELGANVIAIGCEPNGVNINAEVGATDVRALQARVLAEKADLGIAFDGDGDRVIMVDHEGNKVDGDQIMYIIAREGLRQGQLRGGAVGTLMSNMGLELALKQLGIPFARAKVGDRYVLEKMQEKGWRIGAENSGHVILLDKTTTGDGIVAGLQVLAAMARNHMSLHDLCSGMKMFPQILVNVRYTAGSGDPLEHESVKAVTAEVEAALGNRGRVLLRKSGTEPLIRVMVEGEDEAQVTEFAHRIADAVKAV</sequence>